<keyword id="KW-0004">4Fe-4S</keyword>
<keyword id="KW-0963">Cytoplasm</keyword>
<keyword id="KW-1015">Disulfide bond</keyword>
<keyword id="KW-0408">Iron</keyword>
<keyword id="KW-0411">Iron-sulfur</keyword>
<keyword id="KW-0479">Metal-binding</keyword>
<keyword id="KW-0489">Methyltransferase</keyword>
<keyword id="KW-0698">rRNA processing</keyword>
<keyword id="KW-0949">S-adenosyl-L-methionine</keyword>
<keyword id="KW-0808">Transferase</keyword>
<keyword id="KW-0819">tRNA processing</keyword>
<evidence type="ECO:0000255" key="1">
    <source>
        <dbReference type="HAMAP-Rule" id="MF_01849"/>
    </source>
</evidence>
<evidence type="ECO:0000255" key="2">
    <source>
        <dbReference type="PROSITE-ProRule" id="PRU01266"/>
    </source>
</evidence>
<evidence type="ECO:0000256" key="3">
    <source>
        <dbReference type="SAM" id="MobiDB-lite"/>
    </source>
</evidence>
<feature type="chain" id="PRO_1000188539" description="Dual-specificity RNA methyltransferase RlmN">
    <location>
        <begin position="1"/>
        <end position="410"/>
    </location>
</feature>
<feature type="domain" description="Radical SAM core" evidence="2">
    <location>
        <begin position="130"/>
        <end position="373"/>
    </location>
</feature>
<feature type="region of interest" description="Disordered" evidence="3">
    <location>
        <begin position="7"/>
        <end position="26"/>
    </location>
</feature>
<feature type="compositionally biased region" description="Low complexity" evidence="3">
    <location>
        <begin position="15"/>
        <end position="26"/>
    </location>
</feature>
<feature type="active site" description="Proton acceptor" evidence="1">
    <location>
        <position position="120"/>
    </location>
</feature>
<feature type="active site" description="S-methylcysteine intermediate" evidence="1">
    <location>
        <position position="378"/>
    </location>
</feature>
<feature type="binding site" evidence="1">
    <location>
        <position position="144"/>
    </location>
    <ligand>
        <name>[4Fe-4S] cluster</name>
        <dbReference type="ChEBI" id="CHEBI:49883"/>
        <note>4Fe-4S-S-AdoMet</note>
    </ligand>
</feature>
<feature type="binding site" evidence="1">
    <location>
        <position position="148"/>
    </location>
    <ligand>
        <name>[4Fe-4S] cluster</name>
        <dbReference type="ChEBI" id="CHEBI:49883"/>
        <note>4Fe-4S-S-AdoMet</note>
    </ligand>
</feature>
<feature type="binding site" evidence="1">
    <location>
        <position position="151"/>
    </location>
    <ligand>
        <name>[4Fe-4S] cluster</name>
        <dbReference type="ChEBI" id="CHEBI:49883"/>
        <note>4Fe-4S-S-AdoMet</note>
    </ligand>
</feature>
<feature type="binding site" evidence="1">
    <location>
        <begin position="200"/>
        <end position="201"/>
    </location>
    <ligand>
        <name>S-adenosyl-L-methionine</name>
        <dbReference type="ChEBI" id="CHEBI:59789"/>
    </ligand>
</feature>
<feature type="binding site" evidence="1">
    <location>
        <position position="232"/>
    </location>
    <ligand>
        <name>S-adenosyl-L-methionine</name>
        <dbReference type="ChEBI" id="CHEBI:59789"/>
    </ligand>
</feature>
<feature type="binding site" evidence="1">
    <location>
        <begin position="254"/>
        <end position="256"/>
    </location>
    <ligand>
        <name>S-adenosyl-L-methionine</name>
        <dbReference type="ChEBI" id="CHEBI:59789"/>
    </ligand>
</feature>
<feature type="binding site" evidence="1">
    <location>
        <position position="335"/>
    </location>
    <ligand>
        <name>S-adenosyl-L-methionine</name>
        <dbReference type="ChEBI" id="CHEBI:59789"/>
    </ligand>
</feature>
<feature type="disulfide bond" description="(transient)" evidence="1">
    <location>
        <begin position="137"/>
        <end position="378"/>
    </location>
</feature>
<name>RLMN_ACIB3</name>
<proteinExistence type="inferred from homology"/>
<organism>
    <name type="scientific">Acinetobacter baumannii (strain AB307-0294)</name>
    <dbReference type="NCBI Taxonomy" id="557600"/>
    <lineage>
        <taxon>Bacteria</taxon>
        <taxon>Pseudomonadati</taxon>
        <taxon>Pseudomonadota</taxon>
        <taxon>Gammaproteobacteria</taxon>
        <taxon>Moraxellales</taxon>
        <taxon>Moraxellaceae</taxon>
        <taxon>Acinetobacter</taxon>
        <taxon>Acinetobacter calcoaceticus/baumannii complex</taxon>
    </lineage>
</organism>
<comment type="function">
    <text evidence="1">Specifically methylates position 2 of adenine 2503 in 23S rRNA and position 2 of adenine 37 in tRNAs. m2A2503 modification seems to play a crucial role in the proofreading step occurring at the peptidyl transferase center and thus would serve to optimize ribosomal fidelity.</text>
</comment>
<comment type="catalytic activity">
    <reaction evidence="1">
        <text>adenosine(2503) in 23S rRNA + 2 reduced [2Fe-2S]-[ferredoxin] + 2 S-adenosyl-L-methionine = 2-methyladenosine(2503) in 23S rRNA + 5'-deoxyadenosine + L-methionine + 2 oxidized [2Fe-2S]-[ferredoxin] + S-adenosyl-L-homocysteine</text>
        <dbReference type="Rhea" id="RHEA:42916"/>
        <dbReference type="Rhea" id="RHEA-COMP:10000"/>
        <dbReference type="Rhea" id="RHEA-COMP:10001"/>
        <dbReference type="Rhea" id="RHEA-COMP:10152"/>
        <dbReference type="Rhea" id="RHEA-COMP:10282"/>
        <dbReference type="ChEBI" id="CHEBI:17319"/>
        <dbReference type="ChEBI" id="CHEBI:33737"/>
        <dbReference type="ChEBI" id="CHEBI:33738"/>
        <dbReference type="ChEBI" id="CHEBI:57844"/>
        <dbReference type="ChEBI" id="CHEBI:57856"/>
        <dbReference type="ChEBI" id="CHEBI:59789"/>
        <dbReference type="ChEBI" id="CHEBI:74411"/>
        <dbReference type="ChEBI" id="CHEBI:74497"/>
        <dbReference type="EC" id="2.1.1.192"/>
    </reaction>
</comment>
<comment type="catalytic activity">
    <reaction evidence="1">
        <text>adenosine(37) in tRNA + 2 reduced [2Fe-2S]-[ferredoxin] + 2 S-adenosyl-L-methionine = 2-methyladenosine(37) in tRNA + 5'-deoxyadenosine + L-methionine + 2 oxidized [2Fe-2S]-[ferredoxin] + S-adenosyl-L-homocysteine</text>
        <dbReference type="Rhea" id="RHEA:43332"/>
        <dbReference type="Rhea" id="RHEA-COMP:10000"/>
        <dbReference type="Rhea" id="RHEA-COMP:10001"/>
        <dbReference type="Rhea" id="RHEA-COMP:10162"/>
        <dbReference type="Rhea" id="RHEA-COMP:10485"/>
        <dbReference type="ChEBI" id="CHEBI:17319"/>
        <dbReference type="ChEBI" id="CHEBI:33737"/>
        <dbReference type="ChEBI" id="CHEBI:33738"/>
        <dbReference type="ChEBI" id="CHEBI:57844"/>
        <dbReference type="ChEBI" id="CHEBI:57856"/>
        <dbReference type="ChEBI" id="CHEBI:59789"/>
        <dbReference type="ChEBI" id="CHEBI:74411"/>
        <dbReference type="ChEBI" id="CHEBI:74497"/>
        <dbReference type="EC" id="2.1.1.192"/>
    </reaction>
</comment>
<comment type="cofactor">
    <cofactor evidence="1">
        <name>[4Fe-4S] cluster</name>
        <dbReference type="ChEBI" id="CHEBI:49883"/>
    </cofactor>
    <text evidence="1">Binds 1 [4Fe-4S] cluster. The cluster is coordinated with 3 cysteines and an exchangeable S-adenosyl-L-methionine.</text>
</comment>
<comment type="subcellular location">
    <subcellularLocation>
        <location evidence="1">Cytoplasm</location>
    </subcellularLocation>
</comment>
<comment type="miscellaneous">
    <text evidence="1">Reaction proceeds by a ping-pong mechanism involving intermediate methylation of a conserved cysteine residue.</text>
</comment>
<comment type="similarity">
    <text evidence="1">Belongs to the radical SAM superfamily. RlmN family.</text>
</comment>
<accession>B7H072</accession>
<dbReference type="EC" id="2.1.1.192" evidence="1"/>
<dbReference type="EMBL" id="CP001172">
    <property type="protein sequence ID" value="ACJ58022.1"/>
    <property type="molecule type" value="Genomic_DNA"/>
</dbReference>
<dbReference type="RefSeq" id="WP_000093084.1">
    <property type="nucleotide sequence ID" value="NZ_CP001172.1"/>
</dbReference>
<dbReference type="SMR" id="B7H072"/>
<dbReference type="GeneID" id="92892502"/>
<dbReference type="HOGENOM" id="CLU_029101_0_0_6"/>
<dbReference type="Proteomes" id="UP000006924">
    <property type="component" value="Chromosome"/>
</dbReference>
<dbReference type="GO" id="GO:0005737">
    <property type="term" value="C:cytoplasm"/>
    <property type="evidence" value="ECO:0007669"/>
    <property type="project" value="UniProtKB-SubCell"/>
</dbReference>
<dbReference type="GO" id="GO:0051539">
    <property type="term" value="F:4 iron, 4 sulfur cluster binding"/>
    <property type="evidence" value="ECO:0007669"/>
    <property type="project" value="UniProtKB-UniRule"/>
</dbReference>
<dbReference type="GO" id="GO:0046872">
    <property type="term" value="F:metal ion binding"/>
    <property type="evidence" value="ECO:0007669"/>
    <property type="project" value="UniProtKB-KW"/>
</dbReference>
<dbReference type="GO" id="GO:0070040">
    <property type="term" value="F:rRNA (adenine(2503)-C2-)-methyltransferase activity"/>
    <property type="evidence" value="ECO:0007669"/>
    <property type="project" value="UniProtKB-UniRule"/>
</dbReference>
<dbReference type="GO" id="GO:0019843">
    <property type="term" value="F:rRNA binding"/>
    <property type="evidence" value="ECO:0007669"/>
    <property type="project" value="UniProtKB-UniRule"/>
</dbReference>
<dbReference type="GO" id="GO:0002935">
    <property type="term" value="F:tRNA (adenine(37)-C2)-methyltransferase activity"/>
    <property type="evidence" value="ECO:0007669"/>
    <property type="project" value="UniProtKB-UniRule"/>
</dbReference>
<dbReference type="GO" id="GO:0000049">
    <property type="term" value="F:tRNA binding"/>
    <property type="evidence" value="ECO:0007669"/>
    <property type="project" value="UniProtKB-UniRule"/>
</dbReference>
<dbReference type="GO" id="GO:0070475">
    <property type="term" value="P:rRNA base methylation"/>
    <property type="evidence" value="ECO:0007669"/>
    <property type="project" value="UniProtKB-UniRule"/>
</dbReference>
<dbReference type="GO" id="GO:0030488">
    <property type="term" value="P:tRNA methylation"/>
    <property type="evidence" value="ECO:0007669"/>
    <property type="project" value="UniProtKB-UniRule"/>
</dbReference>
<dbReference type="CDD" id="cd01335">
    <property type="entry name" value="Radical_SAM"/>
    <property type="match status" value="1"/>
</dbReference>
<dbReference type="FunFam" id="1.10.150.530:FF:000003">
    <property type="entry name" value="Dual-specificity RNA methyltransferase RlmN"/>
    <property type="match status" value="1"/>
</dbReference>
<dbReference type="FunFam" id="3.20.20.70:FF:000008">
    <property type="entry name" value="Dual-specificity RNA methyltransferase RlmN"/>
    <property type="match status" value="1"/>
</dbReference>
<dbReference type="Gene3D" id="1.10.150.530">
    <property type="match status" value="1"/>
</dbReference>
<dbReference type="Gene3D" id="3.20.20.70">
    <property type="entry name" value="Aldolase class I"/>
    <property type="match status" value="1"/>
</dbReference>
<dbReference type="HAMAP" id="MF_01849">
    <property type="entry name" value="RNA_methyltr_RlmN"/>
    <property type="match status" value="1"/>
</dbReference>
<dbReference type="InterPro" id="IPR013785">
    <property type="entry name" value="Aldolase_TIM"/>
</dbReference>
<dbReference type="InterPro" id="IPR040072">
    <property type="entry name" value="Methyltransferase_A"/>
</dbReference>
<dbReference type="InterPro" id="IPR048641">
    <property type="entry name" value="RlmN_N"/>
</dbReference>
<dbReference type="InterPro" id="IPR027492">
    <property type="entry name" value="RNA_MTrfase_RlmN"/>
</dbReference>
<dbReference type="InterPro" id="IPR004383">
    <property type="entry name" value="rRNA_lsu_MTrfase_RlmN/Cfr"/>
</dbReference>
<dbReference type="InterPro" id="IPR007197">
    <property type="entry name" value="rSAM"/>
</dbReference>
<dbReference type="NCBIfam" id="TIGR00048">
    <property type="entry name" value="rRNA_mod_RlmN"/>
    <property type="match status" value="1"/>
</dbReference>
<dbReference type="PANTHER" id="PTHR30544">
    <property type="entry name" value="23S RRNA METHYLTRANSFERASE"/>
    <property type="match status" value="1"/>
</dbReference>
<dbReference type="PANTHER" id="PTHR30544:SF5">
    <property type="entry name" value="RADICAL SAM CORE DOMAIN-CONTAINING PROTEIN"/>
    <property type="match status" value="1"/>
</dbReference>
<dbReference type="Pfam" id="PF04055">
    <property type="entry name" value="Radical_SAM"/>
    <property type="match status" value="1"/>
</dbReference>
<dbReference type="Pfam" id="PF21016">
    <property type="entry name" value="RlmN_N"/>
    <property type="match status" value="1"/>
</dbReference>
<dbReference type="PIRSF" id="PIRSF006004">
    <property type="entry name" value="CHP00048"/>
    <property type="match status" value="1"/>
</dbReference>
<dbReference type="SFLD" id="SFLDF00275">
    <property type="entry name" value="adenosine_C2_methyltransferase"/>
    <property type="match status" value="1"/>
</dbReference>
<dbReference type="SFLD" id="SFLDG01062">
    <property type="entry name" value="methyltransferase_(Class_A)"/>
    <property type="match status" value="1"/>
</dbReference>
<dbReference type="SUPFAM" id="SSF102114">
    <property type="entry name" value="Radical SAM enzymes"/>
    <property type="match status" value="1"/>
</dbReference>
<dbReference type="PROSITE" id="PS51918">
    <property type="entry name" value="RADICAL_SAM"/>
    <property type="match status" value="1"/>
</dbReference>
<sequence length="410" mass="45757">MSSAVVVSSENLDGQQQSSSTPASPAAEKVNLLGMSRAELEKFFEDIGEKKFRAGQVMKWIHQYFVTDFAEMTNISGKLRAKLEQICEIKAPEVVHRHYSKDGTRKWVFRVGEGSGSLVETVLIPAEDKTGSRKTLCISSQVGCALDCSFCSTGKQGFQRDLTPDEIIGQLWMANYSYMEEVPVAERERSVTNVVMMGMGEPLLNYDAVLSSMHIMLDDFAYGMSKRRVTLSTSGVVPKIDQLAKDIDVALAISLHAPNDELRNELVPINKKYPLAQLIAACQRYIAKDGNESARKHVTIEYVMLEGVNDQPEHAQQLLKLLKNLPSKINLIPFNPFPHAPYGRSSRNRIISFQKTLSDAGFVCTIRQTRGDDIDAACGQLVGQVADRTRRAEQWQKKVAQRQEILRTQG</sequence>
<gene>
    <name evidence="1" type="primary">rlmN</name>
    <name type="ordered locus">ABBFA_003036</name>
</gene>
<protein>
    <recommendedName>
        <fullName evidence="1">Dual-specificity RNA methyltransferase RlmN</fullName>
        <ecNumber evidence="1">2.1.1.192</ecNumber>
    </recommendedName>
    <alternativeName>
        <fullName evidence="1">23S rRNA (adenine(2503)-C(2))-methyltransferase</fullName>
    </alternativeName>
    <alternativeName>
        <fullName evidence="1">23S rRNA m2A2503 methyltransferase</fullName>
    </alternativeName>
    <alternativeName>
        <fullName evidence="1">Ribosomal RNA large subunit methyltransferase N</fullName>
    </alternativeName>
    <alternativeName>
        <fullName evidence="1">tRNA (adenine(37)-C(2))-methyltransferase</fullName>
    </alternativeName>
    <alternativeName>
        <fullName evidence="1">tRNA m2A37 methyltransferase</fullName>
    </alternativeName>
</protein>
<reference key="1">
    <citation type="journal article" date="2008" name="J. Bacteriol.">
        <title>Comparative genome sequence analysis of multidrug-resistant Acinetobacter baumannii.</title>
        <authorList>
            <person name="Adams M.D."/>
            <person name="Goglin K."/>
            <person name="Molyneaux N."/>
            <person name="Hujer K.M."/>
            <person name="Lavender H."/>
            <person name="Jamison J.J."/>
            <person name="MacDonald I.J."/>
            <person name="Martin K.M."/>
            <person name="Russo T."/>
            <person name="Campagnari A.A."/>
            <person name="Hujer A.M."/>
            <person name="Bonomo R.A."/>
            <person name="Gill S.R."/>
        </authorList>
    </citation>
    <scope>NUCLEOTIDE SEQUENCE [LARGE SCALE GENOMIC DNA]</scope>
    <source>
        <strain>AB307-0294</strain>
    </source>
</reference>